<keyword id="KW-0414">Isoprene biosynthesis</keyword>
<keyword id="KW-0460">Magnesium</keyword>
<keyword id="KW-0479">Metal-binding</keyword>
<keyword id="KW-1185">Reference proteome</keyword>
<keyword id="KW-0784">Thiamine biosynthesis</keyword>
<keyword id="KW-0786">Thiamine pyrophosphate</keyword>
<keyword id="KW-0808">Transferase</keyword>
<name>DXS_NOVAD</name>
<sequence>MSQEPATPLLDTVKTPDDLRKLAPTQLRQLADELRVEMISAVGQTGGHLGSGLGVVELTVAIHYVFNTPEDRLVWDVGHQAYPHKILTGRRDRIRTLRQAGGLSGFTKRSESEYDPFGTAHSSTSISAALGFAIANKLSGRLGKGIAVIGDGAMSAGMAYEAMNNAEAAGNRLIVILNDNDMSIAPPVGGLSAYLARLVSSGPFLGLRDIARRLSRKLPRPLHEAARKTDEFARGMAMGGTLFEELGFYYVGPIDGHNIDQLIPVLENVRDAAEGPCLIHVVTQKGKGYAPAEAAADKYHGVQKFDVITGEQVKAKAAAPAYQNVFGETLAKLADADPTICAITAAMPSGTGVDKFAKAHPDRTFDVGIAEQHAVTFAAGLAAEGMRPFCAIYSTFLQRAFDQVVHDVAIQNLPVRFAIDRAGLVGADGATHAGSFDVTYLATLPNLVVMAAADEAELVHMTYTAALHDSGPIAFRYPRGNGVGVPLPEVPERLEIGKGRIIRQGSKVALLSLGTRLAEALKAADQLDARGLSTTVADLRFAKPLDVALIRQLMTTHDVIVTVEEGSIGGLGAHVLTMASDEGLVDGGLKIRTMRLPDLFQDHDAPEKQYDEAGLNAPHIVDTVLKALRHNSAGVSEARA</sequence>
<dbReference type="EC" id="2.2.1.7" evidence="1"/>
<dbReference type="EMBL" id="CP000248">
    <property type="protein sequence ID" value="ABD24610.1"/>
    <property type="molecule type" value="Genomic_DNA"/>
</dbReference>
<dbReference type="RefSeq" id="WP_011443824.1">
    <property type="nucleotide sequence ID" value="NC_007794.1"/>
</dbReference>
<dbReference type="SMR" id="Q2GC13"/>
<dbReference type="STRING" id="279238.Saro_0161"/>
<dbReference type="KEGG" id="nar:Saro_0161"/>
<dbReference type="eggNOG" id="COG1154">
    <property type="taxonomic scope" value="Bacteria"/>
</dbReference>
<dbReference type="HOGENOM" id="CLU_009227_1_4_5"/>
<dbReference type="UniPathway" id="UPA00064">
    <property type="reaction ID" value="UER00091"/>
</dbReference>
<dbReference type="Proteomes" id="UP000009134">
    <property type="component" value="Chromosome"/>
</dbReference>
<dbReference type="GO" id="GO:0008661">
    <property type="term" value="F:1-deoxy-D-xylulose-5-phosphate synthase activity"/>
    <property type="evidence" value="ECO:0007669"/>
    <property type="project" value="UniProtKB-UniRule"/>
</dbReference>
<dbReference type="GO" id="GO:0000287">
    <property type="term" value="F:magnesium ion binding"/>
    <property type="evidence" value="ECO:0007669"/>
    <property type="project" value="UniProtKB-UniRule"/>
</dbReference>
<dbReference type="GO" id="GO:0030976">
    <property type="term" value="F:thiamine pyrophosphate binding"/>
    <property type="evidence" value="ECO:0007669"/>
    <property type="project" value="UniProtKB-UniRule"/>
</dbReference>
<dbReference type="GO" id="GO:0052865">
    <property type="term" value="P:1-deoxy-D-xylulose 5-phosphate biosynthetic process"/>
    <property type="evidence" value="ECO:0007669"/>
    <property type="project" value="UniProtKB-UniPathway"/>
</dbReference>
<dbReference type="GO" id="GO:0019682">
    <property type="term" value="P:glyceraldehyde-3-phosphate metabolic process"/>
    <property type="evidence" value="ECO:0007669"/>
    <property type="project" value="UniProtKB-ARBA"/>
</dbReference>
<dbReference type="GO" id="GO:0016114">
    <property type="term" value="P:terpenoid biosynthetic process"/>
    <property type="evidence" value="ECO:0007669"/>
    <property type="project" value="UniProtKB-UniRule"/>
</dbReference>
<dbReference type="GO" id="GO:0009228">
    <property type="term" value="P:thiamine biosynthetic process"/>
    <property type="evidence" value="ECO:0007669"/>
    <property type="project" value="UniProtKB-UniRule"/>
</dbReference>
<dbReference type="CDD" id="cd02007">
    <property type="entry name" value="TPP_DXS"/>
    <property type="match status" value="1"/>
</dbReference>
<dbReference type="CDD" id="cd07033">
    <property type="entry name" value="TPP_PYR_DXS_TK_like"/>
    <property type="match status" value="1"/>
</dbReference>
<dbReference type="FunFam" id="3.40.50.920:FF:000002">
    <property type="entry name" value="1-deoxy-D-xylulose-5-phosphate synthase"/>
    <property type="match status" value="1"/>
</dbReference>
<dbReference type="FunFam" id="3.40.50.970:FF:000005">
    <property type="entry name" value="1-deoxy-D-xylulose-5-phosphate synthase"/>
    <property type="match status" value="1"/>
</dbReference>
<dbReference type="Gene3D" id="3.40.50.920">
    <property type="match status" value="1"/>
</dbReference>
<dbReference type="Gene3D" id="3.40.50.970">
    <property type="match status" value="2"/>
</dbReference>
<dbReference type="HAMAP" id="MF_00315">
    <property type="entry name" value="DXP_synth"/>
    <property type="match status" value="1"/>
</dbReference>
<dbReference type="InterPro" id="IPR005477">
    <property type="entry name" value="Dxylulose-5-P_synthase"/>
</dbReference>
<dbReference type="InterPro" id="IPR029061">
    <property type="entry name" value="THDP-binding"/>
</dbReference>
<dbReference type="InterPro" id="IPR009014">
    <property type="entry name" value="Transketo_C/PFOR_II"/>
</dbReference>
<dbReference type="InterPro" id="IPR005475">
    <property type="entry name" value="Transketolase-like_Pyr-bd"/>
</dbReference>
<dbReference type="InterPro" id="IPR020826">
    <property type="entry name" value="Transketolase_BS"/>
</dbReference>
<dbReference type="InterPro" id="IPR033248">
    <property type="entry name" value="Transketolase_C"/>
</dbReference>
<dbReference type="InterPro" id="IPR049557">
    <property type="entry name" value="Transketolase_CS"/>
</dbReference>
<dbReference type="NCBIfam" id="TIGR00204">
    <property type="entry name" value="dxs"/>
    <property type="match status" value="1"/>
</dbReference>
<dbReference type="NCBIfam" id="NF003933">
    <property type="entry name" value="PRK05444.2-2"/>
    <property type="match status" value="1"/>
</dbReference>
<dbReference type="PANTHER" id="PTHR43322">
    <property type="entry name" value="1-D-DEOXYXYLULOSE 5-PHOSPHATE SYNTHASE-RELATED"/>
    <property type="match status" value="1"/>
</dbReference>
<dbReference type="PANTHER" id="PTHR43322:SF5">
    <property type="entry name" value="1-DEOXY-D-XYLULOSE-5-PHOSPHATE SYNTHASE, CHLOROPLASTIC"/>
    <property type="match status" value="1"/>
</dbReference>
<dbReference type="Pfam" id="PF13292">
    <property type="entry name" value="DXP_synthase_N"/>
    <property type="match status" value="1"/>
</dbReference>
<dbReference type="Pfam" id="PF02779">
    <property type="entry name" value="Transket_pyr"/>
    <property type="match status" value="1"/>
</dbReference>
<dbReference type="Pfam" id="PF02780">
    <property type="entry name" value="Transketolase_C"/>
    <property type="match status" value="1"/>
</dbReference>
<dbReference type="SMART" id="SM00861">
    <property type="entry name" value="Transket_pyr"/>
    <property type="match status" value="1"/>
</dbReference>
<dbReference type="SUPFAM" id="SSF52518">
    <property type="entry name" value="Thiamin diphosphate-binding fold (THDP-binding)"/>
    <property type="match status" value="2"/>
</dbReference>
<dbReference type="SUPFAM" id="SSF52922">
    <property type="entry name" value="TK C-terminal domain-like"/>
    <property type="match status" value="1"/>
</dbReference>
<dbReference type="PROSITE" id="PS00801">
    <property type="entry name" value="TRANSKETOLASE_1"/>
    <property type="match status" value="1"/>
</dbReference>
<dbReference type="PROSITE" id="PS00802">
    <property type="entry name" value="TRANSKETOLASE_2"/>
    <property type="match status" value="1"/>
</dbReference>
<feature type="chain" id="PRO_0000256448" description="1-deoxy-D-xylulose-5-phosphate synthase">
    <location>
        <begin position="1"/>
        <end position="640"/>
    </location>
</feature>
<feature type="binding site" evidence="1">
    <location>
        <position position="79"/>
    </location>
    <ligand>
        <name>thiamine diphosphate</name>
        <dbReference type="ChEBI" id="CHEBI:58937"/>
    </ligand>
</feature>
<feature type="binding site" evidence="1">
    <location>
        <begin position="120"/>
        <end position="122"/>
    </location>
    <ligand>
        <name>thiamine diphosphate</name>
        <dbReference type="ChEBI" id="CHEBI:58937"/>
    </ligand>
</feature>
<feature type="binding site" evidence="1">
    <location>
        <position position="151"/>
    </location>
    <ligand>
        <name>Mg(2+)</name>
        <dbReference type="ChEBI" id="CHEBI:18420"/>
    </ligand>
</feature>
<feature type="binding site" evidence="1">
    <location>
        <begin position="152"/>
        <end position="153"/>
    </location>
    <ligand>
        <name>thiamine diphosphate</name>
        <dbReference type="ChEBI" id="CHEBI:58937"/>
    </ligand>
</feature>
<feature type="binding site" evidence="1">
    <location>
        <position position="180"/>
    </location>
    <ligand>
        <name>Mg(2+)</name>
        <dbReference type="ChEBI" id="CHEBI:18420"/>
    </ligand>
</feature>
<feature type="binding site" evidence="1">
    <location>
        <position position="180"/>
    </location>
    <ligand>
        <name>thiamine diphosphate</name>
        <dbReference type="ChEBI" id="CHEBI:58937"/>
    </ligand>
</feature>
<feature type="binding site" evidence="1">
    <location>
        <position position="289"/>
    </location>
    <ligand>
        <name>thiamine diphosphate</name>
        <dbReference type="ChEBI" id="CHEBI:58937"/>
    </ligand>
</feature>
<feature type="binding site" evidence="1">
    <location>
        <position position="371"/>
    </location>
    <ligand>
        <name>thiamine diphosphate</name>
        <dbReference type="ChEBI" id="CHEBI:58937"/>
    </ligand>
</feature>
<gene>
    <name evidence="1" type="primary">dxs</name>
    <name type="ordered locus">Saro_0161</name>
</gene>
<accession>Q2GC13</accession>
<protein>
    <recommendedName>
        <fullName evidence="1">1-deoxy-D-xylulose-5-phosphate synthase</fullName>
        <ecNumber evidence="1">2.2.1.7</ecNumber>
    </recommendedName>
    <alternativeName>
        <fullName evidence="1">1-deoxyxylulose-5-phosphate synthase</fullName>
        <shortName evidence="1">DXP synthase</shortName>
        <shortName evidence="1">DXPS</shortName>
    </alternativeName>
</protein>
<reference key="1">
    <citation type="submission" date="2006-01" db="EMBL/GenBank/DDBJ databases">
        <title>Complete sequence of Novosphingobium aromaticivorans DSM 12444.</title>
        <authorList>
            <consortium name="US DOE Joint Genome Institute"/>
            <person name="Copeland A."/>
            <person name="Lucas S."/>
            <person name="Lapidus A."/>
            <person name="Barry K."/>
            <person name="Detter J.C."/>
            <person name="Glavina T."/>
            <person name="Hammon N."/>
            <person name="Israni S."/>
            <person name="Pitluck S."/>
            <person name="Chain P."/>
            <person name="Malfatti S."/>
            <person name="Shin M."/>
            <person name="Vergez L."/>
            <person name="Schmutz J."/>
            <person name="Larimer F."/>
            <person name="Land M."/>
            <person name="Kyrpides N."/>
            <person name="Ivanova N."/>
            <person name="Fredrickson J."/>
            <person name="Balkwill D."/>
            <person name="Romine M.F."/>
            <person name="Richardson P."/>
        </authorList>
    </citation>
    <scope>NUCLEOTIDE SEQUENCE [LARGE SCALE GENOMIC DNA]</scope>
    <source>
        <strain>ATCC 700278 / DSM 12444 / CCUG 56034 / CIP 105152 / NBRC 16084 / F199</strain>
    </source>
</reference>
<evidence type="ECO:0000255" key="1">
    <source>
        <dbReference type="HAMAP-Rule" id="MF_00315"/>
    </source>
</evidence>
<comment type="function">
    <text evidence="1">Catalyzes the acyloin condensation reaction between C atoms 2 and 3 of pyruvate and glyceraldehyde 3-phosphate to yield 1-deoxy-D-xylulose-5-phosphate (DXP).</text>
</comment>
<comment type="catalytic activity">
    <reaction evidence="1">
        <text>D-glyceraldehyde 3-phosphate + pyruvate + H(+) = 1-deoxy-D-xylulose 5-phosphate + CO2</text>
        <dbReference type="Rhea" id="RHEA:12605"/>
        <dbReference type="ChEBI" id="CHEBI:15361"/>
        <dbReference type="ChEBI" id="CHEBI:15378"/>
        <dbReference type="ChEBI" id="CHEBI:16526"/>
        <dbReference type="ChEBI" id="CHEBI:57792"/>
        <dbReference type="ChEBI" id="CHEBI:59776"/>
        <dbReference type="EC" id="2.2.1.7"/>
    </reaction>
</comment>
<comment type="cofactor">
    <cofactor evidence="1">
        <name>Mg(2+)</name>
        <dbReference type="ChEBI" id="CHEBI:18420"/>
    </cofactor>
    <text evidence="1">Binds 1 Mg(2+) ion per subunit.</text>
</comment>
<comment type="cofactor">
    <cofactor evidence="1">
        <name>thiamine diphosphate</name>
        <dbReference type="ChEBI" id="CHEBI:58937"/>
    </cofactor>
    <text evidence="1">Binds 1 thiamine pyrophosphate per subunit.</text>
</comment>
<comment type="pathway">
    <text evidence="1">Metabolic intermediate biosynthesis; 1-deoxy-D-xylulose 5-phosphate biosynthesis; 1-deoxy-D-xylulose 5-phosphate from D-glyceraldehyde 3-phosphate and pyruvate: step 1/1.</text>
</comment>
<comment type="subunit">
    <text evidence="1">Homodimer.</text>
</comment>
<comment type="similarity">
    <text evidence="1">Belongs to the transketolase family. DXPS subfamily.</text>
</comment>
<proteinExistence type="inferred from homology"/>
<organism>
    <name type="scientific">Novosphingobium aromaticivorans (strain ATCC 700278 / DSM 12444 / CCUG 56034 / CIP 105152 / NBRC 16084 / F199)</name>
    <dbReference type="NCBI Taxonomy" id="279238"/>
    <lineage>
        <taxon>Bacteria</taxon>
        <taxon>Pseudomonadati</taxon>
        <taxon>Pseudomonadota</taxon>
        <taxon>Alphaproteobacteria</taxon>
        <taxon>Sphingomonadales</taxon>
        <taxon>Sphingomonadaceae</taxon>
        <taxon>Novosphingobium</taxon>
    </lineage>
</organism>